<comment type="catalytic activity">
    <reaction evidence="1">
        <text>L-histidinol phosphate + 2-oxoglutarate = 3-(imidazol-4-yl)-2-oxopropyl phosphate + L-glutamate</text>
        <dbReference type="Rhea" id="RHEA:23744"/>
        <dbReference type="ChEBI" id="CHEBI:16810"/>
        <dbReference type="ChEBI" id="CHEBI:29985"/>
        <dbReference type="ChEBI" id="CHEBI:57766"/>
        <dbReference type="ChEBI" id="CHEBI:57980"/>
        <dbReference type="EC" id="2.6.1.9"/>
    </reaction>
</comment>
<comment type="cofactor">
    <cofactor evidence="1">
        <name>pyridoxal 5'-phosphate</name>
        <dbReference type="ChEBI" id="CHEBI:597326"/>
    </cofactor>
</comment>
<comment type="pathway">
    <text evidence="1">Amino-acid biosynthesis; L-histidine biosynthesis; L-histidine from 5-phospho-alpha-D-ribose 1-diphosphate: step 7/9.</text>
</comment>
<comment type="subunit">
    <text evidence="1">Homodimer.</text>
</comment>
<comment type="similarity">
    <text evidence="1">Belongs to the class-II pyridoxal-phosphate-dependent aminotransferase family. Histidinol-phosphate aminotransferase subfamily.</text>
</comment>
<sequence>MSDTRPQIKTWIEGIHAYVPGKATGAQGQALIKLSANENPLGCSPKALEALDAPGNPATYPDPDAKALRAKLAEVHGLDAGRIVCGTGSDELLNLAAQAFAGPGDEVLFSTYSFSVYDIAARRCGATPVEAPDADYAADVDALLAAVTDKTRVVFVANPNNPTGSFLPRDEIARLHAGLPQDVLFVLDQAYAEYLTPEEDDGGFALAAAHENVLVTRTFSKAYGLAGERIGWATGAPHFIDALNRVRGPFNVTNSGQAAALAGVDDQNFIDRTRDHNTRELTRFTDAMAALGNHGIRPLPSKANFALVLFEGTLAAETALSALADAGYAVRHLPGQGLPHGLRITIGTAEDMDRIARTIAEAAEAAQ</sequence>
<feature type="chain" id="PRO_0000319757" description="Histidinol-phosphate aminotransferase">
    <location>
        <begin position="1"/>
        <end position="367"/>
    </location>
</feature>
<feature type="modified residue" description="N6-(pyridoxal phosphate)lysine" evidence="1">
    <location>
        <position position="221"/>
    </location>
</feature>
<proteinExistence type="inferred from homology"/>
<dbReference type="EC" id="2.6.1.9" evidence="1"/>
<dbReference type="EMBL" id="CP000157">
    <property type="protein sequence ID" value="ABC64375.1"/>
    <property type="molecule type" value="Genomic_DNA"/>
</dbReference>
<dbReference type="RefSeq" id="WP_011415198.1">
    <property type="nucleotide sequence ID" value="NC_007722.1"/>
</dbReference>
<dbReference type="SMR" id="Q2N7G6"/>
<dbReference type="STRING" id="314225.ELI_11415"/>
<dbReference type="KEGG" id="eli:ELI_11415"/>
<dbReference type="eggNOG" id="COG0079">
    <property type="taxonomic scope" value="Bacteria"/>
</dbReference>
<dbReference type="HOGENOM" id="CLU_017584_3_3_5"/>
<dbReference type="OrthoDB" id="9809616at2"/>
<dbReference type="UniPathway" id="UPA00031">
    <property type="reaction ID" value="UER00012"/>
</dbReference>
<dbReference type="Proteomes" id="UP000008808">
    <property type="component" value="Chromosome"/>
</dbReference>
<dbReference type="GO" id="GO:0004400">
    <property type="term" value="F:histidinol-phosphate transaminase activity"/>
    <property type="evidence" value="ECO:0007669"/>
    <property type="project" value="UniProtKB-UniRule"/>
</dbReference>
<dbReference type="GO" id="GO:0030170">
    <property type="term" value="F:pyridoxal phosphate binding"/>
    <property type="evidence" value="ECO:0007669"/>
    <property type="project" value="InterPro"/>
</dbReference>
<dbReference type="GO" id="GO:0000105">
    <property type="term" value="P:L-histidine biosynthetic process"/>
    <property type="evidence" value="ECO:0007669"/>
    <property type="project" value="UniProtKB-UniRule"/>
</dbReference>
<dbReference type="CDD" id="cd00609">
    <property type="entry name" value="AAT_like"/>
    <property type="match status" value="1"/>
</dbReference>
<dbReference type="Gene3D" id="3.90.1150.10">
    <property type="entry name" value="Aspartate Aminotransferase, domain 1"/>
    <property type="match status" value="1"/>
</dbReference>
<dbReference type="Gene3D" id="3.40.640.10">
    <property type="entry name" value="Type I PLP-dependent aspartate aminotransferase-like (Major domain)"/>
    <property type="match status" value="1"/>
</dbReference>
<dbReference type="HAMAP" id="MF_01023">
    <property type="entry name" value="HisC_aminotrans_2"/>
    <property type="match status" value="1"/>
</dbReference>
<dbReference type="InterPro" id="IPR001917">
    <property type="entry name" value="Aminotrans_II_pyridoxalP_BS"/>
</dbReference>
<dbReference type="InterPro" id="IPR004839">
    <property type="entry name" value="Aminotransferase_I/II_large"/>
</dbReference>
<dbReference type="InterPro" id="IPR005861">
    <property type="entry name" value="HisP_aminotrans"/>
</dbReference>
<dbReference type="InterPro" id="IPR050106">
    <property type="entry name" value="HistidinolP_aminotransfase"/>
</dbReference>
<dbReference type="InterPro" id="IPR015424">
    <property type="entry name" value="PyrdxlP-dep_Trfase"/>
</dbReference>
<dbReference type="InterPro" id="IPR015421">
    <property type="entry name" value="PyrdxlP-dep_Trfase_major"/>
</dbReference>
<dbReference type="InterPro" id="IPR015422">
    <property type="entry name" value="PyrdxlP-dep_Trfase_small"/>
</dbReference>
<dbReference type="NCBIfam" id="TIGR01141">
    <property type="entry name" value="hisC"/>
    <property type="match status" value="1"/>
</dbReference>
<dbReference type="PANTHER" id="PTHR43643:SF3">
    <property type="entry name" value="HISTIDINOL-PHOSPHATE AMINOTRANSFERASE"/>
    <property type="match status" value="1"/>
</dbReference>
<dbReference type="PANTHER" id="PTHR43643">
    <property type="entry name" value="HISTIDINOL-PHOSPHATE AMINOTRANSFERASE 2"/>
    <property type="match status" value="1"/>
</dbReference>
<dbReference type="Pfam" id="PF00155">
    <property type="entry name" value="Aminotran_1_2"/>
    <property type="match status" value="1"/>
</dbReference>
<dbReference type="SUPFAM" id="SSF53383">
    <property type="entry name" value="PLP-dependent transferases"/>
    <property type="match status" value="1"/>
</dbReference>
<dbReference type="PROSITE" id="PS00599">
    <property type="entry name" value="AA_TRANSFER_CLASS_2"/>
    <property type="match status" value="1"/>
</dbReference>
<organism>
    <name type="scientific">Erythrobacter litoralis (strain HTCC2594)</name>
    <dbReference type="NCBI Taxonomy" id="314225"/>
    <lineage>
        <taxon>Bacteria</taxon>
        <taxon>Pseudomonadati</taxon>
        <taxon>Pseudomonadota</taxon>
        <taxon>Alphaproteobacteria</taxon>
        <taxon>Sphingomonadales</taxon>
        <taxon>Erythrobacteraceae</taxon>
        <taxon>Erythrobacter/Porphyrobacter group</taxon>
        <taxon>Erythrobacter</taxon>
    </lineage>
</organism>
<accession>Q2N7G6</accession>
<gene>
    <name evidence="1" type="primary">hisC</name>
    <name type="ordered locus">ELI_11415</name>
</gene>
<keyword id="KW-0028">Amino-acid biosynthesis</keyword>
<keyword id="KW-0032">Aminotransferase</keyword>
<keyword id="KW-0368">Histidine biosynthesis</keyword>
<keyword id="KW-0663">Pyridoxal phosphate</keyword>
<keyword id="KW-1185">Reference proteome</keyword>
<keyword id="KW-0808">Transferase</keyword>
<evidence type="ECO:0000255" key="1">
    <source>
        <dbReference type="HAMAP-Rule" id="MF_01023"/>
    </source>
</evidence>
<name>HIS8_ERYLH</name>
<protein>
    <recommendedName>
        <fullName evidence="1">Histidinol-phosphate aminotransferase</fullName>
        <ecNumber evidence="1">2.6.1.9</ecNumber>
    </recommendedName>
    <alternativeName>
        <fullName evidence="1">Imidazole acetol-phosphate transaminase</fullName>
    </alternativeName>
</protein>
<reference key="1">
    <citation type="journal article" date="2009" name="J. Bacteriol.">
        <title>Complete genome sequence of Erythrobacter litoralis HTCC2594.</title>
        <authorList>
            <person name="Oh H.M."/>
            <person name="Giovannoni S.J."/>
            <person name="Ferriera S."/>
            <person name="Johnson J."/>
            <person name="Cho J.C."/>
        </authorList>
    </citation>
    <scope>NUCLEOTIDE SEQUENCE [LARGE SCALE GENOMIC DNA]</scope>
    <source>
        <strain>HTCC2594</strain>
    </source>
</reference>